<gene>
    <name evidence="1" type="primary">rpsB</name>
    <name type="ordered locus">RER_25420</name>
</gene>
<comment type="similarity">
    <text evidence="1">Belongs to the universal ribosomal protein uS2 family.</text>
</comment>
<keyword id="KW-0687">Ribonucleoprotein</keyword>
<keyword id="KW-0689">Ribosomal protein</keyword>
<organism>
    <name type="scientific">Rhodococcus erythropolis (strain PR4 / NBRC 100887)</name>
    <dbReference type="NCBI Taxonomy" id="234621"/>
    <lineage>
        <taxon>Bacteria</taxon>
        <taxon>Bacillati</taxon>
        <taxon>Actinomycetota</taxon>
        <taxon>Actinomycetes</taxon>
        <taxon>Mycobacteriales</taxon>
        <taxon>Nocardiaceae</taxon>
        <taxon>Rhodococcus</taxon>
        <taxon>Rhodococcus erythropolis group</taxon>
    </lineage>
</organism>
<protein>
    <recommendedName>
        <fullName evidence="1">Small ribosomal subunit protein uS2</fullName>
    </recommendedName>
    <alternativeName>
        <fullName evidence="3">30S ribosomal protein S2</fullName>
    </alternativeName>
</protein>
<evidence type="ECO:0000255" key="1">
    <source>
        <dbReference type="HAMAP-Rule" id="MF_00291"/>
    </source>
</evidence>
<evidence type="ECO:0000256" key="2">
    <source>
        <dbReference type="SAM" id="MobiDB-lite"/>
    </source>
</evidence>
<evidence type="ECO:0000305" key="3"/>
<dbReference type="EMBL" id="AP008957">
    <property type="protein sequence ID" value="BAH33250.1"/>
    <property type="molecule type" value="Genomic_DNA"/>
</dbReference>
<dbReference type="RefSeq" id="WP_003942709.1">
    <property type="nucleotide sequence ID" value="NC_012490.1"/>
</dbReference>
<dbReference type="SMR" id="C0ZY15"/>
<dbReference type="GeneID" id="93803469"/>
<dbReference type="KEGG" id="rer:RER_25420"/>
<dbReference type="eggNOG" id="COG0052">
    <property type="taxonomic scope" value="Bacteria"/>
</dbReference>
<dbReference type="HOGENOM" id="CLU_040318_2_3_11"/>
<dbReference type="Proteomes" id="UP000002204">
    <property type="component" value="Chromosome"/>
</dbReference>
<dbReference type="GO" id="GO:0022627">
    <property type="term" value="C:cytosolic small ribosomal subunit"/>
    <property type="evidence" value="ECO:0007669"/>
    <property type="project" value="TreeGrafter"/>
</dbReference>
<dbReference type="GO" id="GO:0003735">
    <property type="term" value="F:structural constituent of ribosome"/>
    <property type="evidence" value="ECO:0007669"/>
    <property type="project" value="InterPro"/>
</dbReference>
<dbReference type="GO" id="GO:0006412">
    <property type="term" value="P:translation"/>
    <property type="evidence" value="ECO:0007669"/>
    <property type="project" value="UniProtKB-UniRule"/>
</dbReference>
<dbReference type="CDD" id="cd01425">
    <property type="entry name" value="RPS2"/>
    <property type="match status" value="1"/>
</dbReference>
<dbReference type="FunFam" id="1.10.287.610:FF:000001">
    <property type="entry name" value="30S ribosomal protein S2"/>
    <property type="match status" value="1"/>
</dbReference>
<dbReference type="Gene3D" id="3.40.50.10490">
    <property type="entry name" value="Glucose-6-phosphate isomerase like protein, domain 1"/>
    <property type="match status" value="1"/>
</dbReference>
<dbReference type="Gene3D" id="1.10.287.610">
    <property type="entry name" value="Helix hairpin bin"/>
    <property type="match status" value="1"/>
</dbReference>
<dbReference type="HAMAP" id="MF_00291_B">
    <property type="entry name" value="Ribosomal_uS2_B"/>
    <property type="match status" value="1"/>
</dbReference>
<dbReference type="InterPro" id="IPR001865">
    <property type="entry name" value="Ribosomal_uS2"/>
</dbReference>
<dbReference type="InterPro" id="IPR005706">
    <property type="entry name" value="Ribosomal_uS2_bac/mit/plastid"/>
</dbReference>
<dbReference type="InterPro" id="IPR018130">
    <property type="entry name" value="Ribosomal_uS2_CS"/>
</dbReference>
<dbReference type="InterPro" id="IPR023591">
    <property type="entry name" value="Ribosomal_uS2_flav_dom_sf"/>
</dbReference>
<dbReference type="NCBIfam" id="TIGR01011">
    <property type="entry name" value="rpsB_bact"/>
    <property type="match status" value="1"/>
</dbReference>
<dbReference type="PANTHER" id="PTHR12534">
    <property type="entry name" value="30S RIBOSOMAL PROTEIN S2 PROKARYOTIC AND ORGANELLAR"/>
    <property type="match status" value="1"/>
</dbReference>
<dbReference type="PANTHER" id="PTHR12534:SF0">
    <property type="entry name" value="SMALL RIBOSOMAL SUBUNIT PROTEIN US2M"/>
    <property type="match status" value="1"/>
</dbReference>
<dbReference type="Pfam" id="PF00318">
    <property type="entry name" value="Ribosomal_S2"/>
    <property type="match status" value="1"/>
</dbReference>
<dbReference type="PRINTS" id="PR00395">
    <property type="entry name" value="RIBOSOMALS2"/>
</dbReference>
<dbReference type="SUPFAM" id="SSF52313">
    <property type="entry name" value="Ribosomal protein S2"/>
    <property type="match status" value="1"/>
</dbReference>
<dbReference type="PROSITE" id="PS00962">
    <property type="entry name" value="RIBOSOMAL_S2_1"/>
    <property type="match status" value="1"/>
</dbReference>
<accession>C0ZY15</accession>
<sequence>MAVVTMKQMLDSGTHFGHQTRRWNPKMKRFILTDRNGIYIIDLQQTLTYIDKAYEFVKETVAHGGTVLFVGTKKQAQESIASEATRVGMPYVNQRWLGGMLTNFTTVHKRLLRLKELEAMEQTGGFEGRTKKEILMLTREMTKLDRTLGGIRDMAKVPSAVWIVDTNKEHLAVAEARKLNIPVIAILDTNCDPDLVDYPIPGNDDAIRSAALLTKVVASAVAEGVQARAGLSADKDAKPEAGAGEPLAEWEQELLSQAAPAAEAEAAPAAEAEAAPAAEAPATEA</sequence>
<feature type="chain" id="PRO_1000204891" description="Small ribosomal subunit protein uS2">
    <location>
        <begin position="1"/>
        <end position="285"/>
    </location>
</feature>
<feature type="region of interest" description="Disordered" evidence="2">
    <location>
        <begin position="228"/>
        <end position="285"/>
    </location>
</feature>
<feature type="compositionally biased region" description="Low complexity" evidence="2">
    <location>
        <begin position="258"/>
        <end position="285"/>
    </location>
</feature>
<reference key="1">
    <citation type="submission" date="2005-03" db="EMBL/GenBank/DDBJ databases">
        <title>Comparison of the complete genome sequences of Rhodococcus erythropolis PR4 and Rhodococcus opacus B4.</title>
        <authorList>
            <person name="Takarada H."/>
            <person name="Sekine M."/>
            <person name="Hosoyama A."/>
            <person name="Yamada R."/>
            <person name="Fujisawa T."/>
            <person name="Omata S."/>
            <person name="Shimizu A."/>
            <person name="Tsukatani N."/>
            <person name="Tanikawa S."/>
            <person name="Fujita N."/>
            <person name="Harayama S."/>
        </authorList>
    </citation>
    <scope>NUCLEOTIDE SEQUENCE [LARGE SCALE GENOMIC DNA]</scope>
    <source>
        <strain>PR4 / NBRC 100887</strain>
    </source>
</reference>
<name>RS2_RHOE4</name>
<proteinExistence type="inferred from homology"/>